<comment type="function">
    <text evidence="1">May control the interaction of photosystem II (PSII) cores with the light-harvesting antenna, regulates electron flow through the 2 photosystem reaction centers. PSII is a light-driven water plastoquinone oxidoreductase, using light energy to abstract electrons from H(2)O, generating a proton gradient subsequently used for ATP formation.</text>
</comment>
<comment type="subunit">
    <text evidence="1">PSII is composed of 1 copy each of membrane proteins PsbA, PsbB, PsbC, PsbD, PsbE, PsbF, PsbH, PsbI, PsbJ, PsbK, PsbL, PsbM, PsbT, PsbY, PsbZ, Psb30/Ycf12, at least 3 peripheral proteins of the oxygen-evolving complex and a large number of cofactors. It forms dimeric complexes.</text>
</comment>
<comment type="subcellular location">
    <subcellularLocation>
        <location evidence="1">Plastid</location>
        <location evidence="1">Chloroplast thylakoid membrane</location>
        <topology evidence="1">Multi-pass membrane protein</topology>
    </subcellularLocation>
</comment>
<comment type="similarity">
    <text evidence="3">Belongs to the PsbZ family.</text>
</comment>
<sequence>NGWNENKNFILLGAVTWAILVFIVGSLNSYVI</sequence>
<geneLocation type="chloroplast"/>
<keyword id="KW-0150">Chloroplast</keyword>
<keyword id="KW-0472">Membrane</keyword>
<keyword id="KW-0602">Photosynthesis</keyword>
<keyword id="KW-0604">Photosystem II</keyword>
<keyword id="KW-0934">Plastid</keyword>
<keyword id="KW-0674">Reaction center</keyword>
<keyword id="KW-0793">Thylakoid</keyword>
<keyword id="KW-0812">Transmembrane</keyword>
<keyword id="KW-1133">Transmembrane helix</keyword>
<name>PSBZ_EUGST</name>
<feature type="chain" id="PRO_0000217702" description="Photosystem II reaction center protein Z">
    <location>
        <begin position="1" status="less than"/>
        <end position="32"/>
    </location>
</feature>
<feature type="transmembrane region" description="Helical" evidence="2">
    <location>
        <begin position="9"/>
        <end position="31"/>
    </location>
</feature>
<feature type="non-terminal residue">
    <location>
        <position position="1"/>
    </location>
</feature>
<accession>Q8SL89</accession>
<evidence type="ECO:0000250" key="1">
    <source>
        <dbReference type="UniProtKB" id="P92276"/>
    </source>
</evidence>
<evidence type="ECO:0000255" key="2"/>
<evidence type="ECO:0000305" key="3"/>
<gene>
    <name evidence="3" type="primary">psbZ</name>
    <name type="synonym">ycf9</name>
</gene>
<proteinExistence type="inferred from homology"/>
<dbReference type="EMBL" id="AY047486">
    <property type="protein sequence ID" value="AAL83365.1"/>
    <property type="molecule type" value="Genomic_DNA"/>
</dbReference>
<dbReference type="SMR" id="Q8SL89"/>
<dbReference type="GO" id="GO:0009535">
    <property type="term" value="C:chloroplast thylakoid membrane"/>
    <property type="evidence" value="ECO:0007669"/>
    <property type="project" value="UniProtKB-SubCell"/>
</dbReference>
<dbReference type="GO" id="GO:0009539">
    <property type="term" value="C:photosystem II reaction center"/>
    <property type="evidence" value="ECO:0007669"/>
    <property type="project" value="InterPro"/>
</dbReference>
<dbReference type="GO" id="GO:0015979">
    <property type="term" value="P:photosynthesis"/>
    <property type="evidence" value="ECO:0007669"/>
    <property type="project" value="UniProtKB-KW"/>
</dbReference>
<dbReference type="GO" id="GO:0042549">
    <property type="term" value="P:photosystem II stabilization"/>
    <property type="evidence" value="ECO:0007669"/>
    <property type="project" value="InterPro"/>
</dbReference>
<dbReference type="Gene3D" id="1.10.287.740">
    <property type="entry name" value="Photosystem II PsbZ, reaction centre"/>
    <property type="match status" value="1"/>
</dbReference>
<dbReference type="InterPro" id="IPR002644">
    <property type="entry name" value="PSII_PsbZ"/>
</dbReference>
<dbReference type="InterPro" id="IPR036512">
    <property type="entry name" value="PSII_PsbZ_sf"/>
</dbReference>
<dbReference type="Pfam" id="PF01737">
    <property type="entry name" value="Ycf9"/>
    <property type="match status" value="1"/>
</dbReference>
<dbReference type="SUPFAM" id="SSF161055">
    <property type="entry name" value="PsbZ-like"/>
    <property type="match status" value="1"/>
</dbReference>
<protein>
    <recommendedName>
        <fullName evidence="3">Photosystem II reaction center protein Z</fullName>
        <shortName evidence="3">PSII-Z</shortName>
    </recommendedName>
</protein>
<reference key="1">
    <citation type="journal article" date="2002" name="Nucleic Acids Res.">
        <title>Identification and comparative analysis of the chloroplast alpha-subunit gene of DNA-dependent RNA polymerase from seven Euglena species.</title>
        <authorList>
            <person name="Sheveleva E.V."/>
            <person name="Giordani N.V."/>
            <person name="Hallick R.B."/>
        </authorList>
    </citation>
    <scope>NUCLEOTIDE SEQUENCE [GENOMIC DNA]</scope>
</reference>
<organism>
    <name type="scientific">Euglena stellata</name>
    <dbReference type="NCBI Taxonomy" id="38278"/>
    <lineage>
        <taxon>Eukaryota</taxon>
        <taxon>Discoba</taxon>
        <taxon>Euglenozoa</taxon>
        <taxon>Euglenida</taxon>
        <taxon>Spirocuta</taxon>
        <taxon>Euglenophyceae</taxon>
        <taxon>Euglenales</taxon>
        <taxon>Euglenaceae</taxon>
        <taxon>Euglena</taxon>
    </lineage>
</organism>